<comment type="function">
    <text evidence="1">Involved in protein export. Acts as a chaperone by maintaining the newly synthesized protein in an open conformation. Functions as a peptidyl-prolyl cis-trans isomerase.</text>
</comment>
<comment type="catalytic activity">
    <reaction evidence="1">
        <text>[protein]-peptidylproline (omega=180) = [protein]-peptidylproline (omega=0)</text>
        <dbReference type="Rhea" id="RHEA:16237"/>
        <dbReference type="Rhea" id="RHEA-COMP:10747"/>
        <dbReference type="Rhea" id="RHEA-COMP:10748"/>
        <dbReference type="ChEBI" id="CHEBI:83833"/>
        <dbReference type="ChEBI" id="CHEBI:83834"/>
        <dbReference type="EC" id="5.2.1.8"/>
    </reaction>
</comment>
<comment type="subcellular location">
    <subcellularLocation>
        <location>Cytoplasm</location>
    </subcellularLocation>
    <text evidence="1">About half TF is bound to the ribosome near the polypeptide exit tunnel while the other half is free in the cytoplasm.</text>
</comment>
<comment type="domain">
    <text evidence="1">Consists of 3 domains; the N-terminus binds the ribosome, the middle domain has PPIase activity, while the C-terminus has intrinsic chaperone activity on its own.</text>
</comment>
<comment type="similarity">
    <text evidence="1">Belongs to the FKBP-type PPIase family. Tig subfamily.</text>
</comment>
<evidence type="ECO:0000255" key="1">
    <source>
        <dbReference type="HAMAP-Rule" id="MF_00303"/>
    </source>
</evidence>
<evidence type="ECO:0000256" key="2">
    <source>
        <dbReference type="SAM" id="MobiDB-lite"/>
    </source>
</evidence>
<feature type="chain" id="PRO_0000179406" description="Trigger factor">
    <location>
        <begin position="1"/>
        <end position="473"/>
    </location>
</feature>
<feature type="domain" description="PPIase FKBP-type" evidence="1">
    <location>
        <begin position="174"/>
        <end position="261"/>
    </location>
</feature>
<feature type="region of interest" description="Disordered" evidence="2">
    <location>
        <begin position="442"/>
        <end position="473"/>
    </location>
</feature>
<feature type="compositionally biased region" description="Low complexity" evidence="2">
    <location>
        <begin position="444"/>
        <end position="453"/>
    </location>
</feature>
<feature type="compositionally biased region" description="Basic residues" evidence="2">
    <location>
        <begin position="454"/>
        <end position="467"/>
    </location>
</feature>
<name>TIG_PROMP</name>
<keyword id="KW-0131">Cell cycle</keyword>
<keyword id="KW-0132">Cell division</keyword>
<keyword id="KW-0143">Chaperone</keyword>
<keyword id="KW-0963">Cytoplasm</keyword>
<keyword id="KW-0413">Isomerase</keyword>
<keyword id="KW-0697">Rotamase</keyword>
<protein>
    <recommendedName>
        <fullName evidence="1">Trigger factor</fullName>
        <shortName evidence="1">TF</shortName>
        <ecNumber evidence="1">5.2.1.8</ecNumber>
    </recommendedName>
    <alternativeName>
        <fullName evidence="1">PPIase</fullName>
    </alternativeName>
</protein>
<sequence length="473" mass="53534">MIKEELIVKTTALPQSRIALELEIPSNTCKSCVNETINSISRSAKIPGFRLGKIPKQVLIQRIGITQLHASALEKIIDKSWNQALKMESIEPLSEPELVDGFESILKFFNPEKPLKITLQTDIAPEFKLKKSKGLSVEIKKSKFDPKSIDEALEKSRNQLANIIPVNNRPAKLGDIAVVSFKGVYKDSKKEIDGGSSDSMDLELEKNKMIPGFVEGIVGMKIDDNKTLTLRFPEDYSHEDSRGKEAIFDISLKDLKEKELPELNDDFAKQSGNKDSLKELKKDIEKQLKENFDNTQKNIKVEALMDALSKELDAEIPKAMIDIEVRNNIEQTAQRFAQQGMDIKSTFTPELVKSLAESTRPQAEKNVQRNLALKALSEREKITVDNEEIDQKMKEYEDEISKSPKQIDIQKLKDVVRNDLLQEKLITWLEENSAVKEINEKATKLTTKTTTKATTKKGVKTKSKPKVNKKEKN</sequence>
<gene>
    <name evidence="1" type="primary">tig</name>
    <name type="ordered locus">PMM1655</name>
</gene>
<organism>
    <name type="scientific">Prochlorococcus marinus subsp. pastoris (strain CCMP1986 / NIES-2087 / MED4)</name>
    <dbReference type="NCBI Taxonomy" id="59919"/>
    <lineage>
        <taxon>Bacteria</taxon>
        <taxon>Bacillati</taxon>
        <taxon>Cyanobacteriota</taxon>
        <taxon>Cyanophyceae</taxon>
        <taxon>Synechococcales</taxon>
        <taxon>Prochlorococcaceae</taxon>
        <taxon>Prochlorococcus</taxon>
    </lineage>
</organism>
<proteinExistence type="inferred from homology"/>
<accession>Q7UZK8</accession>
<dbReference type="EC" id="5.2.1.8" evidence="1"/>
<dbReference type="EMBL" id="BX548174">
    <property type="protein sequence ID" value="CAE20114.1"/>
    <property type="molecule type" value="Genomic_DNA"/>
</dbReference>
<dbReference type="RefSeq" id="WP_011133282.1">
    <property type="nucleotide sequence ID" value="NC_005072.1"/>
</dbReference>
<dbReference type="SMR" id="Q7UZK8"/>
<dbReference type="STRING" id="59919.PMM1655"/>
<dbReference type="KEGG" id="pmm:PMM1655"/>
<dbReference type="eggNOG" id="COG0544">
    <property type="taxonomic scope" value="Bacteria"/>
</dbReference>
<dbReference type="HOGENOM" id="CLU_033058_3_1_3"/>
<dbReference type="OrthoDB" id="9767721at2"/>
<dbReference type="Proteomes" id="UP000001026">
    <property type="component" value="Chromosome"/>
</dbReference>
<dbReference type="GO" id="GO:0005737">
    <property type="term" value="C:cytoplasm"/>
    <property type="evidence" value="ECO:0007669"/>
    <property type="project" value="UniProtKB-SubCell"/>
</dbReference>
<dbReference type="GO" id="GO:0003755">
    <property type="term" value="F:peptidyl-prolyl cis-trans isomerase activity"/>
    <property type="evidence" value="ECO:0007669"/>
    <property type="project" value="UniProtKB-UniRule"/>
</dbReference>
<dbReference type="GO" id="GO:0044183">
    <property type="term" value="F:protein folding chaperone"/>
    <property type="evidence" value="ECO:0007669"/>
    <property type="project" value="TreeGrafter"/>
</dbReference>
<dbReference type="GO" id="GO:0043022">
    <property type="term" value="F:ribosome binding"/>
    <property type="evidence" value="ECO:0007669"/>
    <property type="project" value="TreeGrafter"/>
</dbReference>
<dbReference type="GO" id="GO:0051083">
    <property type="term" value="P:'de novo' cotranslational protein folding"/>
    <property type="evidence" value="ECO:0007669"/>
    <property type="project" value="TreeGrafter"/>
</dbReference>
<dbReference type="GO" id="GO:0051301">
    <property type="term" value="P:cell division"/>
    <property type="evidence" value="ECO:0007669"/>
    <property type="project" value="UniProtKB-KW"/>
</dbReference>
<dbReference type="GO" id="GO:0061077">
    <property type="term" value="P:chaperone-mediated protein folding"/>
    <property type="evidence" value="ECO:0007669"/>
    <property type="project" value="TreeGrafter"/>
</dbReference>
<dbReference type="GO" id="GO:0015031">
    <property type="term" value="P:protein transport"/>
    <property type="evidence" value="ECO:0007669"/>
    <property type="project" value="UniProtKB-UniRule"/>
</dbReference>
<dbReference type="GO" id="GO:0043335">
    <property type="term" value="P:protein unfolding"/>
    <property type="evidence" value="ECO:0007669"/>
    <property type="project" value="TreeGrafter"/>
</dbReference>
<dbReference type="FunFam" id="3.10.50.40:FF:000001">
    <property type="entry name" value="Trigger factor"/>
    <property type="match status" value="1"/>
</dbReference>
<dbReference type="FunFam" id="3.30.70.1050:FF:000004">
    <property type="entry name" value="Trigger factor"/>
    <property type="match status" value="1"/>
</dbReference>
<dbReference type="Gene3D" id="3.10.50.40">
    <property type="match status" value="1"/>
</dbReference>
<dbReference type="Gene3D" id="3.30.70.1050">
    <property type="entry name" value="Trigger factor ribosome-binding domain"/>
    <property type="match status" value="1"/>
</dbReference>
<dbReference type="Gene3D" id="1.10.3120.10">
    <property type="entry name" value="Trigger factor, C-terminal domain"/>
    <property type="match status" value="1"/>
</dbReference>
<dbReference type="HAMAP" id="MF_00303">
    <property type="entry name" value="Trigger_factor_Tig"/>
    <property type="match status" value="1"/>
</dbReference>
<dbReference type="InterPro" id="IPR046357">
    <property type="entry name" value="PPIase_dom_sf"/>
</dbReference>
<dbReference type="InterPro" id="IPR001179">
    <property type="entry name" value="PPIase_FKBP_dom"/>
</dbReference>
<dbReference type="InterPro" id="IPR005215">
    <property type="entry name" value="Trig_fac"/>
</dbReference>
<dbReference type="InterPro" id="IPR008880">
    <property type="entry name" value="Trigger_fac_C"/>
</dbReference>
<dbReference type="InterPro" id="IPR037041">
    <property type="entry name" value="Trigger_fac_C_sf"/>
</dbReference>
<dbReference type="InterPro" id="IPR008881">
    <property type="entry name" value="Trigger_fac_ribosome-bd_bac"/>
</dbReference>
<dbReference type="InterPro" id="IPR036611">
    <property type="entry name" value="Trigger_fac_ribosome-bd_sf"/>
</dbReference>
<dbReference type="InterPro" id="IPR027304">
    <property type="entry name" value="Trigger_fact/SurA_dom_sf"/>
</dbReference>
<dbReference type="NCBIfam" id="TIGR00115">
    <property type="entry name" value="tig"/>
    <property type="match status" value="1"/>
</dbReference>
<dbReference type="PANTHER" id="PTHR30560">
    <property type="entry name" value="TRIGGER FACTOR CHAPERONE AND PEPTIDYL-PROLYL CIS/TRANS ISOMERASE"/>
    <property type="match status" value="1"/>
</dbReference>
<dbReference type="PANTHER" id="PTHR30560:SF3">
    <property type="entry name" value="TRIGGER FACTOR-LIKE PROTEIN TIG, CHLOROPLASTIC"/>
    <property type="match status" value="1"/>
</dbReference>
<dbReference type="Pfam" id="PF00254">
    <property type="entry name" value="FKBP_C"/>
    <property type="match status" value="1"/>
</dbReference>
<dbReference type="Pfam" id="PF05698">
    <property type="entry name" value="Trigger_C"/>
    <property type="match status" value="1"/>
</dbReference>
<dbReference type="Pfam" id="PF05697">
    <property type="entry name" value="Trigger_N"/>
    <property type="match status" value="1"/>
</dbReference>
<dbReference type="PIRSF" id="PIRSF003095">
    <property type="entry name" value="Trigger_factor"/>
    <property type="match status" value="1"/>
</dbReference>
<dbReference type="SUPFAM" id="SSF54534">
    <property type="entry name" value="FKBP-like"/>
    <property type="match status" value="1"/>
</dbReference>
<dbReference type="SUPFAM" id="SSF109998">
    <property type="entry name" value="Triger factor/SurA peptide-binding domain-like"/>
    <property type="match status" value="1"/>
</dbReference>
<dbReference type="SUPFAM" id="SSF102735">
    <property type="entry name" value="Trigger factor ribosome-binding domain"/>
    <property type="match status" value="1"/>
</dbReference>
<dbReference type="PROSITE" id="PS50059">
    <property type="entry name" value="FKBP_PPIASE"/>
    <property type="match status" value="1"/>
</dbReference>
<reference key="1">
    <citation type="journal article" date="2003" name="Nature">
        <title>Genome divergence in two Prochlorococcus ecotypes reflects oceanic niche differentiation.</title>
        <authorList>
            <person name="Rocap G."/>
            <person name="Larimer F.W."/>
            <person name="Lamerdin J.E."/>
            <person name="Malfatti S."/>
            <person name="Chain P."/>
            <person name="Ahlgren N.A."/>
            <person name="Arellano A."/>
            <person name="Coleman M."/>
            <person name="Hauser L."/>
            <person name="Hess W.R."/>
            <person name="Johnson Z.I."/>
            <person name="Land M.L."/>
            <person name="Lindell D."/>
            <person name="Post A.F."/>
            <person name="Regala W."/>
            <person name="Shah M."/>
            <person name="Shaw S.L."/>
            <person name="Steglich C."/>
            <person name="Sullivan M.B."/>
            <person name="Ting C.S."/>
            <person name="Tolonen A."/>
            <person name="Webb E.A."/>
            <person name="Zinser E.R."/>
            <person name="Chisholm S.W."/>
        </authorList>
    </citation>
    <scope>NUCLEOTIDE SEQUENCE [LARGE SCALE GENOMIC DNA]</scope>
    <source>
        <strain>CCMP1986 / NIES-2087 / MED4</strain>
    </source>
</reference>